<gene>
    <name evidence="1" type="primary">rpmC</name>
    <name evidence="1" type="synonym">rpl29</name>
    <name type="ordered locus">P9515_17321</name>
</gene>
<proteinExistence type="inferred from homology"/>
<evidence type="ECO:0000255" key="1">
    <source>
        <dbReference type="HAMAP-Rule" id="MF_00374"/>
    </source>
</evidence>
<evidence type="ECO:0000305" key="2"/>
<protein>
    <recommendedName>
        <fullName evidence="1">Large ribosomal subunit protein uL29</fullName>
    </recommendedName>
    <alternativeName>
        <fullName evidence="2">50S ribosomal protein L29</fullName>
    </alternativeName>
</protein>
<accession>A2BYS8</accession>
<organism>
    <name type="scientific">Prochlorococcus marinus (strain MIT 9515)</name>
    <dbReference type="NCBI Taxonomy" id="167542"/>
    <lineage>
        <taxon>Bacteria</taxon>
        <taxon>Bacillati</taxon>
        <taxon>Cyanobacteriota</taxon>
        <taxon>Cyanophyceae</taxon>
        <taxon>Synechococcales</taxon>
        <taxon>Prochlorococcaceae</taxon>
        <taxon>Prochlorococcus</taxon>
    </lineage>
</organism>
<keyword id="KW-0687">Ribonucleoprotein</keyword>
<keyword id="KW-0689">Ribosomal protein</keyword>
<sequence>MKNSESIKEFKKLNSSEINEKIDQLRKDLFDLRFKQATRQLNETHQFKIIKKQVAQLLTLSKSQSNSQKSSD</sequence>
<feature type="chain" id="PRO_1000007555" description="Large ribosomal subunit protein uL29">
    <location>
        <begin position="1"/>
        <end position="72"/>
    </location>
</feature>
<reference key="1">
    <citation type="journal article" date="2007" name="PLoS Genet.">
        <title>Patterns and implications of gene gain and loss in the evolution of Prochlorococcus.</title>
        <authorList>
            <person name="Kettler G.C."/>
            <person name="Martiny A.C."/>
            <person name="Huang K."/>
            <person name="Zucker J."/>
            <person name="Coleman M.L."/>
            <person name="Rodrigue S."/>
            <person name="Chen F."/>
            <person name="Lapidus A."/>
            <person name="Ferriera S."/>
            <person name="Johnson J."/>
            <person name="Steglich C."/>
            <person name="Church G.M."/>
            <person name="Richardson P."/>
            <person name="Chisholm S.W."/>
        </authorList>
    </citation>
    <scope>NUCLEOTIDE SEQUENCE [LARGE SCALE GENOMIC DNA]</scope>
    <source>
        <strain>MIT 9515</strain>
    </source>
</reference>
<comment type="similarity">
    <text evidence="1">Belongs to the universal ribosomal protein uL29 family.</text>
</comment>
<dbReference type="EMBL" id="CP000552">
    <property type="protein sequence ID" value="ABM72939.1"/>
    <property type="molecule type" value="Genomic_DNA"/>
</dbReference>
<dbReference type="RefSeq" id="WP_011821029.1">
    <property type="nucleotide sequence ID" value="NC_008817.1"/>
</dbReference>
<dbReference type="SMR" id="A2BYS8"/>
<dbReference type="STRING" id="167542.P9515_17321"/>
<dbReference type="GeneID" id="60200992"/>
<dbReference type="KEGG" id="pmc:P9515_17321"/>
<dbReference type="eggNOG" id="COG0255">
    <property type="taxonomic scope" value="Bacteria"/>
</dbReference>
<dbReference type="HOGENOM" id="CLU_158491_0_1_3"/>
<dbReference type="OrthoDB" id="9815192at2"/>
<dbReference type="Proteomes" id="UP000001589">
    <property type="component" value="Chromosome"/>
</dbReference>
<dbReference type="GO" id="GO:0022625">
    <property type="term" value="C:cytosolic large ribosomal subunit"/>
    <property type="evidence" value="ECO:0007669"/>
    <property type="project" value="TreeGrafter"/>
</dbReference>
<dbReference type="GO" id="GO:0003735">
    <property type="term" value="F:structural constituent of ribosome"/>
    <property type="evidence" value="ECO:0007669"/>
    <property type="project" value="InterPro"/>
</dbReference>
<dbReference type="GO" id="GO:0006412">
    <property type="term" value="P:translation"/>
    <property type="evidence" value="ECO:0007669"/>
    <property type="project" value="UniProtKB-UniRule"/>
</dbReference>
<dbReference type="Gene3D" id="1.10.287.310">
    <property type="match status" value="1"/>
</dbReference>
<dbReference type="HAMAP" id="MF_00374">
    <property type="entry name" value="Ribosomal_uL29"/>
    <property type="match status" value="1"/>
</dbReference>
<dbReference type="InterPro" id="IPR050063">
    <property type="entry name" value="Ribosomal_protein_uL29"/>
</dbReference>
<dbReference type="InterPro" id="IPR001854">
    <property type="entry name" value="Ribosomal_uL29"/>
</dbReference>
<dbReference type="InterPro" id="IPR036049">
    <property type="entry name" value="Ribosomal_uL29_sf"/>
</dbReference>
<dbReference type="NCBIfam" id="TIGR00012">
    <property type="entry name" value="L29"/>
    <property type="match status" value="1"/>
</dbReference>
<dbReference type="PANTHER" id="PTHR10916">
    <property type="entry name" value="60S RIBOSOMAL PROTEIN L35/50S RIBOSOMAL PROTEIN L29"/>
    <property type="match status" value="1"/>
</dbReference>
<dbReference type="PANTHER" id="PTHR10916:SF0">
    <property type="entry name" value="LARGE RIBOSOMAL SUBUNIT PROTEIN UL29C"/>
    <property type="match status" value="1"/>
</dbReference>
<dbReference type="Pfam" id="PF00831">
    <property type="entry name" value="Ribosomal_L29"/>
    <property type="match status" value="1"/>
</dbReference>
<dbReference type="SUPFAM" id="SSF46561">
    <property type="entry name" value="Ribosomal protein L29 (L29p)"/>
    <property type="match status" value="1"/>
</dbReference>
<name>RL29_PROM5</name>